<dbReference type="EMBL" id="AB168549">
    <property type="protein sequence ID" value="BAE00664.1"/>
    <property type="status" value="ALT_FRAME"/>
    <property type="molecule type" value="mRNA"/>
</dbReference>
<dbReference type="RefSeq" id="NP_001270851.1">
    <property type="nucleotide sequence ID" value="NM_001283922.1"/>
</dbReference>
<dbReference type="SMR" id="Q4R8A8"/>
<dbReference type="STRING" id="9541.ENSMFAP00000016994"/>
<dbReference type="VEuPathDB" id="HostDB:ENSMFAG00000031646"/>
<dbReference type="eggNOG" id="ENOG502S64S">
    <property type="taxonomic scope" value="Eukaryota"/>
</dbReference>
<dbReference type="OMA" id="EFKDPMV"/>
<dbReference type="Proteomes" id="UP000233100">
    <property type="component" value="Chromosome 16"/>
</dbReference>
<dbReference type="GO" id="GO:0005783">
    <property type="term" value="C:endoplasmic reticulum"/>
    <property type="evidence" value="ECO:0000250"/>
    <property type="project" value="UniProtKB"/>
</dbReference>
<dbReference type="GO" id="GO:0005764">
    <property type="term" value="C:lysosome"/>
    <property type="evidence" value="ECO:0000250"/>
    <property type="project" value="UniProtKB"/>
</dbReference>
<dbReference type="GO" id="GO:0031965">
    <property type="term" value="C:nuclear membrane"/>
    <property type="evidence" value="ECO:0000250"/>
    <property type="project" value="UniProtKB"/>
</dbReference>
<dbReference type="GO" id="GO:0005886">
    <property type="term" value="C:plasma membrane"/>
    <property type="evidence" value="ECO:0000250"/>
    <property type="project" value="UniProtKB"/>
</dbReference>
<dbReference type="GO" id="GO:0005791">
    <property type="term" value="C:rough endoplasmic reticulum"/>
    <property type="evidence" value="ECO:0000250"/>
    <property type="project" value="UniProtKB"/>
</dbReference>
<dbReference type="GO" id="GO:0030867">
    <property type="term" value="C:rough endoplasmic reticulum membrane"/>
    <property type="evidence" value="ECO:0007669"/>
    <property type="project" value="UniProtKB-SubCell"/>
</dbReference>
<dbReference type="GO" id="GO:0015485">
    <property type="term" value="F:cholesterol binding"/>
    <property type="evidence" value="ECO:0000250"/>
    <property type="project" value="UniProtKB"/>
</dbReference>
<dbReference type="GO" id="GO:0008142">
    <property type="term" value="F:oxysterol binding"/>
    <property type="evidence" value="ECO:0000250"/>
    <property type="project" value="UniProtKB"/>
</dbReference>
<dbReference type="GO" id="GO:0042632">
    <property type="term" value="P:cholesterol homeostasis"/>
    <property type="evidence" value="ECO:0000250"/>
    <property type="project" value="UniProtKB"/>
</dbReference>
<dbReference type="GO" id="GO:0140077">
    <property type="term" value="P:positive regulation of lipoprotein transport"/>
    <property type="evidence" value="ECO:0000250"/>
    <property type="project" value="UniProtKB"/>
</dbReference>
<dbReference type="GO" id="GO:0090303">
    <property type="term" value="P:positive regulation of wound healing"/>
    <property type="evidence" value="ECO:0000250"/>
    <property type="project" value="UniProtKB"/>
</dbReference>
<dbReference type="GO" id="GO:0032383">
    <property type="term" value="P:regulation of intracellular cholesterol transport"/>
    <property type="evidence" value="ECO:0000250"/>
    <property type="project" value="UniProtKB"/>
</dbReference>
<dbReference type="GO" id="GO:0032377">
    <property type="term" value="P:regulation of intracellular lipid transport"/>
    <property type="evidence" value="ECO:0000250"/>
    <property type="project" value="UniProtKB"/>
</dbReference>
<dbReference type="InterPro" id="IPR033118">
    <property type="entry name" value="EXPERA"/>
</dbReference>
<dbReference type="InterPro" id="IPR051987">
    <property type="entry name" value="Sigma-2_receptor-like"/>
</dbReference>
<dbReference type="InterPro" id="IPR016964">
    <property type="entry name" value="Sigma2_recept"/>
</dbReference>
<dbReference type="PANTHER" id="PTHR31204">
    <property type="entry name" value="SIGMA INTRACELLULAR RECEPTOR 2"/>
    <property type="match status" value="1"/>
</dbReference>
<dbReference type="PANTHER" id="PTHR31204:SF1">
    <property type="entry name" value="SIGMA INTRACELLULAR RECEPTOR 2"/>
    <property type="match status" value="1"/>
</dbReference>
<dbReference type="Pfam" id="PF05241">
    <property type="entry name" value="EBP"/>
    <property type="match status" value="1"/>
</dbReference>
<dbReference type="PIRSF" id="PIRSF031032">
    <property type="entry name" value="TMP_97_prd"/>
    <property type="match status" value="1"/>
</dbReference>
<dbReference type="PROSITE" id="PS51751">
    <property type="entry name" value="EXPERA"/>
    <property type="match status" value="1"/>
</dbReference>
<accession>Q4R8A8</accession>
<feature type="chain" id="PRO_0000254568" description="Sigma intracellular receptor 2">
    <location>
        <begin position="1"/>
        <end position="176"/>
    </location>
</feature>
<feature type="topological domain" description="Cytoplasmic" evidence="1">
    <location>
        <begin position="1"/>
        <end position="9"/>
    </location>
</feature>
<feature type="transmembrane region" description="Helical; Name=1" evidence="4">
    <location>
        <begin position="10"/>
        <end position="30"/>
    </location>
</feature>
<feature type="topological domain" description="Lumenal" evidence="1">
    <location>
        <begin position="31"/>
        <end position="68"/>
    </location>
</feature>
<feature type="transmembrane region" description="Helical; Name=2" evidence="4">
    <location>
        <begin position="69"/>
        <end position="89"/>
    </location>
</feature>
<feature type="topological domain" description="Cytoplasmic" evidence="1">
    <location>
        <begin position="90"/>
        <end position="99"/>
    </location>
</feature>
<feature type="transmembrane region" description="Helical; Name=3" evidence="4">
    <location>
        <begin position="100"/>
        <end position="120"/>
    </location>
</feature>
<feature type="topological domain" description="Lumenal" evidence="1">
    <location>
        <begin position="121"/>
        <end position="140"/>
    </location>
</feature>
<feature type="transmembrane region" description="Helical; Name=4" evidence="4">
    <location>
        <begin position="141"/>
        <end position="161"/>
    </location>
</feature>
<feature type="topological domain" description="Cytoplasmic" evidence="1">
    <location>
        <begin position="162"/>
        <end position="176"/>
    </location>
</feature>
<feature type="domain" description="EXPERA" evidence="5">
    <location>
        <begin position="10"/>
        <end position="158"/>
    </location>
</feature>
<feature type="short sequence motif" description="ER retention motif" evidence="3">
    <location>
        <begin position="172"/>
        <end position="176"/>
    </location>
</feature>
<feature type="binding site" evidence="2">
    <location>
        <position position="75"/>
    </location>
    <ligand>
        <name>cholesterol</name>
        <dbReference type="ChEBI" id="CHEBI:16113"/>
    </ligand>
</feature>
<feature type="binding site" evidence="2">
    <location>
        <position position="77"/>
    </location>
    <ligand>
        <name>cholesterol</name>
        <dbReference type="ChEBI" id="CHEBI:16113"/>
    </ligand>
</feature>
<feature type="site" description="Likely important for receptor folding" evidence="3">
    <location>
        <position position="56"/>
    </location>
</feature>
<feature type="site" description="Important for 20(S)-OHC binding and stereoselectivity" evidence="3">
    <location>
        <position position="150"/>
    </location>
</feature>
<keyword id="KW-0256">Endoplasmic reticulum</keyword>
<keyword id="KW-0472">Membrane</keyword>
<keyword id="KW-0539">Nucleus</keyword>
<keyword id="KW-1185">Reference proteome</keyword>
<keyword id="KW-0812">Transmembrane</keyword>
<keyword id="KW-1133">Transmembrane helix</keyword>
<comment type="function">
    <text evidence="1 2 3">Sigma-2 receptor which contributes to ameliorate dysfunctional cellular processes and slow degenerative progression by regulating cell functions including cholesterol biosynthesis/trafficking, membrane trafficking, autophagy, lipid membrane-bound protein trafficking, and receptor stabilization at the cell surface. Forms a ternary complex with PGRMC1 receptor and low density lipoprotein receptor/LDLR at the plasma membrane, which increases LDLR-mediated LDL cholesterol internalization. Decreases lysosomal sterol transporter NPC1 availability to the cell, probably through NPC1-binding, hence controlling lipid transport, including cholesterol and LBPA, outside of late endosome/lysosome. Binds regio- and stereoselective ligand 20(S)-hydroxycholesterol (20(S)-OHC) which enhances TMEM97-NPC1 interaction and decreases TMEM97-PGRMC1 and TMEM97-TSPO interactions, thereby linking OHC binding to cholesterol homeostasis (By similarity). Also able to bind cholesterol (By similarity). Binds histatin 1 (Hst 1)/HN1 salivary peptide at the ER membrane, which is critical for increasing mitochondria-ER contacts and stimulating Hst1 wound healing properties. May alter the activity of some cytochrome P450 proteins. Although shows homologies with sterol isomerases (EXPERA domain), not able to catalyze sterol isomerization. However, may act as sensors of these molecules (By similarity). Acts as a quality control factor in the ER, promoting the proteolytic degradation of nonproductive and extramitochondrial precursor proteins in the ER membrane thus removing them from the ER surface (By similarity).</text>
</comment>
<comment type="subunit">
    <text evidence="2 3">Homodimer (By similarity). Interacts with NPC1; the interaction impairs NPC1-mediated cholesterol transport. Interacts with PGRMC1 and LDLR; the interaction increases LDL internalization. Interacts with histatin 1/HTN1; the interaction induces HTN1-stimulating wound healing. Interacts with TSPO (By similarity).</text>
</comment>
<comment type="subcellular location">
    <subcellularLocation>
        <location evidence="3">Rough endoplasmic reticulum membrane</location>
        <topology evidence="4">Multi-pass membrane protein</topology>
    </subcellularLocation>
    <subcellularLocation>
        <location evidence="3">Nucleus membrane</location>
        <topology evidence="4">Multi-pass membrane protein</topology>
    </subcellularLocation>
</comment>
<comment type="domain">
    <text evidence="3">The EXPERA domain doesn't possess any sterol isomerase catalytic activity.</text>
</comment>
<comment type="domain">
    <text evidence="2">The four transmembrane helices are all kinked owing to the presence of proline residues in each, creating a ligand-binding cavity near the center of the protein.</text>
</comment>
<comment type="miscellaneous">
    <text evidence="3">Sigma receptors are classified into two subtypes (Sigma-1 and Sigma-2) based on their different pharmacological profile. Sigma-2 receptors are identified by radioligand-binding studies as a binding site with high affinity for di-o-tolylguanidine (DTG) and haloperidol.</text>
</comment>
<comment type="similarity">
    <text evidence="6">Belongs to the TMEM97/sigma-2 receptor family.</text>
</comment>
<comment type="sequence caution" evidence="6">
    <conflict type="frameshift">
        <sequence resource="EMBL-CDS" id="BAE00664"/>
    </conflict>
</comment>
<proteinExistence type="evidence at transcript level"/>
<name>SGMR2_MACFA</name>
<organism>
    <name type="scientific">Macaca fascicularis</name>
    <name type="common">Crab-eating macaque</name>
    <name type="synonym">Cynomolgus monkey</name>
    <dbReference type="NCBI Taxonomy" id="9541"/>
    <lineage>
        <taxon>Eukaryota</taxon>
        <taxon>Metazoa</taxon>
        <taxon>Chordata</taxon>
        <taxon>Craniata</taxon>
        <taxon>Vertebrata</taxon>
        <taxon>Euteleostomi</taxon>
        <taxon>Mammalia</taxon>
        <taxon>Eutheria</taxon>
        <taxon>Euarchontoglires</taxon>
        <taxon>Primates</taxon>
        <taxon>Haplorrhini</taxon>
        <taxon>Catarrhini</taxon>
        <taxon>Cercopithecidae</taxon>
        <taxon>Cercopithecinae</taxon>
        <taxon>Macaca</taxon>
    </lineage>
</organism>
<protein>
    <recommendedName>
        <fullName evidence="3">Sigma intracellular receptor 2</fullName>
        <shortName evidence="3">Sigma-2 receptor</shortName>
        <shortName evidence="3">Sigma2 receptor</shortName>
    </recommendedName>
    <alternativeName>
        <fullName evidence="3">Transmembrane protein 97</fullName>
    </alternativeName>
</protein>
<sequence length="176" mass="20890">MGVPATRRCVEWLLGIYFLSHIPITLFMDLQAVLPRELYPVEFRNLLKWYAKEFKDPLLQEPPAWFKSFLFCELVFQLPFFPIATYAFLKGSCKWIRTPAIIYSVHTMTTLIPILSTFLFEDFSKASGFKGQRPETLHERLTLISVYAPYLLIPFILLIFMLRSPYYKYEEKRKKK</sequence>
<reference key="1">
    <citation type="submission" date="2005-06" db="EMBL/GenBank/DDBJ databases">
        <title>DNA sequences of macaque genes expressed in brain or testis and its evolutionary implications.</title>
        <authorList>
            <consortium name="International consortium for macaque cDNA sequencing and analysis"/>
        </authorList>
    </citation>
    <scope>NUCLEOTIDE SEQUENCE [LARGE SCALE MRNA]</scope>
    <source>
        <tissue>Testis</tissue>
    </source>
</reference>
<evidence type="ECO:0000250" key="1">
    <source>
        <dbReference type="UniProtKB" id="Q12155"/>
    </source>
</evidence>
<evidence type="ECO:0000250" key="2">
    <source>
        <dbReference type="UniProtKB" id="Q3MHW7"/>
    </source>
</evidence>
<evidence type="ECO:0000250" key="3">
    <source>
        <dbReference type="UniProtKB" id="Q5BJF2"/>
    </source>
</evidence>
<evidence type="ECO:0000255" key="4"/>
<evidence type="ECO:0000255" key="5">
    <source>
        <dbReference type="PROSITE-ProRule" id="PRU01087"/>
    </source>
</evidence>
<evidence type="ECO:0000305" key="6"/>
<gene>
    <name type="primary">Tmem97</name>
    <name evidence="3" type="synonym">S2R</name>
    <name type="ORF">QtsA-12948</name>
</gene>